<proteinExistence type="evidence at transcript level"/>
<comment type="function">
    <text evidence="2 6">Transcription factor involved in epithelial development (PubMed:15705857). Binds directly to the consensus DNA sequence 5'-AACCGGTT-3' and modulates expression of epidermal-specific genes, including XK81A1 (PubMed:15705857). Important regulator of DSG1 in the context of epidermal differentiation. Regulates the maintenance of skin barrier. No genetic interaction with GRHL3, nor functional cooperativity due to diverse target gene selectivity during epithelia development (By similarity). Functions downstream of BMP-signaling cascade modulating endogenous bmp4-responsive targets (PubMed:15705857).</text>
</comment>
<comment type="subunit">
    <text evidence="3">Binds DNA as homodimer.</text>
</comment>
<comment type="subcellular location">
    <subcellularLocation>
        <location evidence="2">Nucleus</location>
    </subcellularLocation>
</comment>
<comment type="developmental stage">
    <text evidence="6">After fertilization, expressed at the animal pole. Expression becomes restricted to the non-neuronal ectoderm of the embryo with progression through gastrulation and neurulation. Expression is observed only in the most superficial cellular layer of the embryo, being absent from the neural plate At later stages, expression is restricted to tissues with an epidermal fate.</text>
</comment>
<comment type="disease">
    <text>Defects in grhl1 are the cause of defective epidermal differentiation.</text>
</comment>
<comment type="miscellaneous">
    <text evidence="2">GRHL genes (GRHL1, GRHL2 and GRHL3) show a paradoxical lack of redundancy despite their extensive sequence identity in the DNA-binding and protein dimerization domains and the fact that the core consensus DNA binding sites are identical. They have related but remarkably different functions during embryogenesis because of their differential spatiotemporal expression patterns during development.</text>
</comment>
<comment type="similarity">
    <text evidence="7">Belongs to the grh/CP2 family. Grainyhead subfamily.</text>
</comment>
<sequence length="609" mass="69732">MTQDYDNKRPVLVLQNDGLYQQRRSYTNEDEAWKSFLENPLTAATKAMMSINGDEDSAAALGLLYDYYKVPRERRLSAAKQEHDHADHEHSKRNGLPQINEQALLPDNRVQVLKTVPFNIVVPLANQVDKRGHLTTPDTTAAVSIAHPIKTESQSHCFSVGLQSVFHTEPTERIVAFDRAVPSDHFTSNNQPPNSQRRTPDSTFSETYKEDVPEVFFPPDLSLRMGSMNSEDYVFDSVAGNNFEYTLEASKSLRPKPGDSTMTYLNKGQFYPITLKEIGSNKGIHHPISKVRSVIMVVFADDKSREDQLRHWKYWHSRQHTAKQRCIDIADYKESFNTISNIEEIAYNAISFTWDLNDEGKVFISVNCLSTDFSSQKGVKGLPLNLQIDTYSYNNRSNKPVHRAYCQIKVFCDKGAERKIRDEERKQSKRKVQDVKVGLLPTHKRTDITVFKPMMDLDTQPVLFIPDVHFANLQRTTHVLPISPEDMEGELNPGMKRLPFSPEEDFNTPPAKLPRVDEPKRVLLYVRRETEEVFDALMLKTPTLKGLMEAVSEKYEVPIEKIGKIFKKCKKGILVNMDDNIIKHYSNEDTFHLQIEESGGSYKLTLTEI</sequence>
<organism>
    <name type="scientific">Xenopus laevis</name>
    <name type="common">African clawed frog</name>
    <dbReference type="NCBI Taxonomy" id="8355"/>
    <lineage>
        <taxon>Eukaryota</taxon>
        <taxon>Metazoa</taxon>
        <taxon>Chordata</taxon>
        <taxon>Craniata</taxon>
        <taxon>Vertebrata</taxon>
        <taxon>Euteleostomi</taxon>
        <taxon>Amphibia</taxon>
        <taxon>Batrachia</taxon>
        <taxon>Anura</taxon>
        <taxon>Pipoidea</taxon>
        <taxon>Pipidae</taxon>
        <taxon>Xenopodinae</taxon>
        <taxon>Xenopus</taxon>
        <taxon>Xenopus</taxon>
    </lineage>
</organism>
<evidence type="ECO:0000250" key="1">
    <source>
        <dbReference type="UniProtKB" id="Q8K5C0"/>
    </source>
</evidence>
<evidence type="ECO:0000250" key="2">
    <source>
        <dbReference type="UniProtKB" id="Q921D9"/>
    </source>
</evidence>
<evidence type="ECO:0000250" key="3">
    <source>
        <dbReference type="UniProtKB" id="Q9NZI5"/>
    </source>
</evidence>
<evidence type="ECO:0000255" key="4">
    <source>
        <dbReference type="PROSITE-ProRule" id="PRU01313"/>
    </source>
</evidence>
<evidence type="ECO:0000256" key="5">
    <source>
        <dbReference type="SAM" id="MobiDB-lite"/>
    </source>
</evidence>
<evidence type="ECO:0000269" key="6">
    <source>
    </source>
</evidence>
<evidence type="ECO:0000305" key="7"/>
<protein>
    <recommendedName>
        <fullName evidence="3">Grainyhead-like protein 1 homolog</fullName>
    </recommendedName>
    <alternativeName>
        <fullName>Transcription factor CP2-like 2</fullName>
    </alternativeName>
</protein>
<feature type="chain" id="PRO_0000227993" description="Grainyhead-like protein 1 homolog">
    <location>
        <begin position="1"/>
        <end position="609"/>
    </location>
</feature>
<feature type="domain" description="Grh/CP2 DB" evidence="4">
    <location>
        <begin position="239"/>
        <end position="465"/>
    </location>
</feature>
<feature type="region of interest" description="Transcription activation" evidence="1">
    <location>
        <begin position="1"/>
        <end position="91"/>
    </location>
</feature>
<feature type="region of interest" description="Disordered" evidence="5">
    <location>
        <begin position="183"/>
        <end position="207"/>
    </location>
</feature>
<feature type="region of interest" description="Interaction with DNA" evidence="3">
    <location>
        <begin position="371"/>
        <end position="380"/>
    </location>
</feature>
<feature type="region of interest" description="Interaction with DNA" evidence="3">
    <location>
        <begin position="418"/>
        <end position="421"/>
    </location>
</feature>
<feature type="compositionally biased region" description="Polar residues" evidence="5">
    <location>
        <begin position="185"/>
        <end position="206"/>
    </location>
</feature>
<reference key="1">
    <citation type="journal article" date="2005" name="Development">
        <title>BMP4-dependent expression of Xenopus Grainyhead-like 1 is essential for epidermal differentiation.</title>
        <authorList>
            <person name="Tao J."/>
            <person name="Kuliyev E."/>
            <person name="Wang X."/>
            <person name="Li X."/>
            <person name="Wilanowski T."/>
            <person name="Jane S.M."/>
            <person name="Mead P.E."/>
            <person name="Cunningham J.M."/>
        </authorList>
    </citation>
    <scope>NUCLEOTIDE SEQUENCE [MRNA]</scope>
    <scope>FUNCTION</scope>
    <scope>DEVELOPMENTAL STAGE</scope>
</reference>
<dbReference type="EMBL" id="AY591750">
    <property type="protein sequence ID" value="AAT88108.1"/>
    <property type="molecule type" value="mRNA"/>
</dbReference>
<dbReference type="RefSeq" id="NP_001089071.1">
    <property type="nucleotide sequence ID" value="NM_001095602.1"/>
</dbReference>
<dbReference type="SMR" id="Q5EY87"/>
<dbReference type="GeneID" id="733170"/>
<dbReference type="KEGG" id="xla:733170"/>
<dbReference type="AGR" id="Xenbase:XB-GENE-486580"/>
<dbReference type="CTD" id="733170"/>
<dbReference type="Xenbase" id="XB-GENE-486580">
    <property type="gene designation" value="grhl1.L"/>
</dbReference>
<dbReference type="OrthoDB" id="7680836at2759"/>
<dbReference type="Proteomes" id="UP000186698">
    <property type="component" value="Chromosome 5L"/>
</dbReference>
<dbReference type="Bgee" id="733170">
    <property type="expression patterns" value="Expressed in zone of skin and 9 other cell types or tissues"/>
</dbReference>
<dbReference type="GO" id="GO:0005634">
    <property type="term" value="C:nucleus"/>
    <property type="evidence" value="ECO:0000318"/>
    <property type="project" value="GO_Central"/>
</dbReference>
<dbReference type="GO" id="GO:0001228">
    <property type="term" value="F:DNA-binding transcription activator activity, RNA polymerase II-specific"/>
    <property type="evidence" value="ECO:0000318"/>
    <property type="project" value="GO_Central"/>
</dbReference>
<dbReference type="GO" id="GO:0000978">
    <property type="term" value="F:RNA polymerase II cis-regulatory region sequence-specific DNA binding"/>
    <property type="evidence" value="ECO:0000318"/>
    <property type="project" value="GO_Central"/>
</dbReference>
<dbReference type="GO" id="GO:0006357">
    <property type="term" value="P:regulation of transcription by RNA polymerase II"/>
    <property type="evidence" value="ECO:0000318"/>
    <property type="project" value="GO_Central"/>
</dbReference>
<dbReference type="InterPro" id="IPR007604">
    <property type="entry name" value="CP2"/>
</dbReference>
<dbReference type="InterPro" id="IPR040167">
    <property type="entry name" value="TF_CP2-like"/>
</dbReference>
<dbReference type="PANTHER" id="PTHR11037:SF16">
    <property type="entry name" value="GRAINYHEAD-LIKE PROTEIN 1 HOMOLOG"/>
    <property type="match status" value="1"/>
</dbReference>
<dbReference type="PANTHER" id="PTHR11037">
    <property type="entry name" value="TRANSCRIPTION FACTOR CP2"/>
    <property type="match status" value="1"/>
</dbReference>
<dbReference type="Pfam" id="PF04516">
    <property type="entry name" value="CP2"/>
    <property type="match status" value="1"/>
</dbReference>
<dbReference type="Pfam" id="PF25416">
    <property type="entry name" value="GRHL1_C"/>
    <property type="match status" value="1"/>
</dbReference>
<dbReference type="PROSITE" id="PS51968">
    <property type="entry name" value="GRH_CP2_DB"/>
    <property type="match status" value="1"/>
</dbReference>
<gene>
    <name evidence="3" type="primary">grhl1</name>
</gene>
<name>GRHL1_XENLA</name>
<keyword id="KW-0010">Activator</keyword>
<keyword id="KW-0217">Developmental protein</keyword>
<keyword id="KW-0238">DNA-binding</keyword>
<keyword id="KW-0539">Nucleus</keyword>
<keyword id="KW-1185">Reference proteome</keyword>
<keyword id="KW-0804">Transcription</keyword>
<keyword id="KW-0805">Transcription regulation</keyword>
<accession>Q5EY87</accession>